<reference key="1">
    <citation type="journal article" date="1995" name="J. Bacteriol.">
        <title>Organization and growth phase-dependent transcription of methane genes in two regions of the Methanobacterium thermoautotrophicum genome.</title>
        <authorList>
            <person name="Noelling J."/>
            <person name="Pihl T.D."/>
            <person name="Vriesema A."/>
            <person name="Reeve J.N."/>
        </authorList>
    </citation>
    <scope>NUCLEOTIDE SEQUENCE [GENOMIC DNA]</scope>
    <source>
        <strain>ATCC 29096 / DSM 1053 / JCM 10044 / NBRC 100330 / Delta H</strain>
    </source>
</reference>
<reference key="2">
    <citation type="journal article" date="1997" name="J. Bacteriol.">
        <title>Complete genome sequence of Methanobacterium thermoautotrophicum deltaH: functional analysis and comparative genomics.</title>
        <authorList>
            <person name="Smith D.R."/>
            <person name="Doucette-Stamm L.A."/>
            <person name="Deloughery C."/>
            <person name="Lee H.-M."/>
            <person name="Dubois J."/>
            <person name="Aldredge T."/>
            <person name="Bashirzadeh R."/>
            <person name="Blakely D."/>
            <person name="Cook R."/>
            <person name="Gilbert K."/>
            <person name="Harrison D."/>
            <person name="Hoang L."/>
            <person name="Keagle P."/>
            <person name="Lumm W."/>
            <person name="Pothier B."/>
            <person name="Qiu D."/>
            <person name="Spadafora R."/>
            <person name="Vicare R."/>
            <person name="Wang Y."/>
            <person name="Wierzbowski J."/>
            <person name="Gibson R."/>
            <person name="Jiwani N."/>
            <person name="Caruso A."/>
            <person name="Bush D."/>
            <person name="Safer H."/>
            <person name="Patwell D."/>
            <person name="Prabhakar S."/>
            <person name="McDougall S."/>
            <person name="Shimer G."/>
            <person name="Goyal A."/>
            <person name="Pietrovski S."/>
            <person name="Church G.M."/>
            <person name="Daniels C.J."/>
            <person name="Mao J.-I."/>
            <person name="Rice P."/>
            <person name="Noelling J."/>
            <person name="Reeve J.N."/>
        </authorList>
    </citation>
    <scope>NUCLEOTIDE SEQUENCE [LARGE SCALE GENOMIC DNA]</scope>
    <source>
        <strain>ATCC 29096 / DSM 1053 / JCM 10044 / NBRC 100330 / Delta H</strain>
    </source>
</reference>
<gene>
    <name type="primary">mtd</name>
    <name type="ordered locus">MTH_1464</name>
</gene>
<name>MTD_METTH</name>
<organism>
    <name type="scientific">Methanothermobacter thermautotrophicus (strain ATCC 29096 / DSM 1053 / JCM 10044 / NBRC 100330 / Delta H)</name>
    <name type="common">Methanobacterium thermoautotrophicum</name>
    <dbReference type="NCBI Taxonomy" id="187420"/>
    <lineage>
        <taxon>Archaea</taxon>
        <taxon>Methanobacteriati</taxon>
        <taxon>Methanobacteriota</taxon>
        <taxon>Methanomada group</taxon>
        <taxon>Methanobacteria</taxon>
        <taxon>Methanobacteriales</taxon>
        <taxon>Methanobacteriaceae</taxon>
        <taxon>Methanothermobacter</taxon>
    </lineage>
</organism>
<dbReference type="EC" id="1.5.98.1"/>
<dbReference type="EMBL" id="U19362">
    <property type="protein sequence ID" value="AAA87412.1"/>
    <property type="molecule type" value="Genomic_DNA"/>
</dbReference>
<dbReference type="EMBL" id="AE000666">
    <property type="protein sequence ID" value="AAB85939.1"/>
    <property type="molecule type" value="Genomic_DNA"/>
</dbReference>
<dbReference type="PIR" id="A69062">
    <property type="entry name" value="A69062"/>
</dbReference>
<dbReference type="RefSeq" id="WP_010877074.1">
    <property type="nucleotide sequence ID" value="NC_000916.1"/>
</dbReference>
<dbReference type="SMR" id="Q50501"/>
<dbReference type="FunCoup" id="Q50501">
    <property type="interactions" value="67"/>
</dbReference>
<dbReference type="STRING" id="187420.MTH_1464"/>
<dbReference type="PaxDb" id="187420-MTH_1464"/>
<dbReference type="EnsemblBacteria" id="AAB85939">
    <property type="protein sequence ID" value="AAB85939"/>
    <property type="gene ID" value="MTH_1464"/>
</dbReference>
<dbReference type="KEGG" id="mth:MTH_1464"/>
<dbReference type="PATRIC" id="fig|187420.15.peg.1426"/>
<dbReference type="HOGENOM" id="CLU_1006890_0_0_2"/>
<dbReference type="InParanoid" id="Q50501"/>
<dbReference type="UniPathway" id="UPA00640">
    <property type="reaction ID" value="UER00695"/>
</dbReference>
<dbReference type="Proteomes" id="UP000005223">
    <property type="component" value="Chromosome"/>
</dbReference>
<dbReference type="GO" id="GO:0008901">
    <property type="term" value="F:ferredoxin hydrogenase activity"/>
    <property type="evidence" value="ECO:0007669"/>
    <property type="project" value="InterPro"/>
</dbReference>
<dbReference type="GO" id="GO:0030268">
    <property type="term" value="F:methylenetetrahydromethanopterin dehydrogenase activity"/>
    <property type="evidence" value="ECO:0007669"/>
    <property type="project" value="UniProtKB-UniRule"/>
</dbReference>
<dbReference type="GO" id="GO:0019386">
    <property type="term" value="P:methanogenesis, from carbon dioxide"/>
    <property type="evidence" value="ECO:0007669"/>
    <property type="project" value="UniProtKB-UniRule"/>
</dbReference>
<dbReference type="GO" id="GO:0006730">
    <property type="term" value="P:one-carbon metabolic process"/>
    <property type="evidence" value="ECO:0007669"/>
    <property type="project" value="UniProtKB-UniRule"/>
</dbReference>
<dbReference type="FunFam" id="3.40.50.10830:FF:000001">
    <property type="entry name" value="F420-dependent methylenetetrahydromethanopterin dehydrogenase"/>
    <property type="match status" value="1"/>
</dbReference>
<dbReference type="Gene3D" id="6.10.140.120">
    <property type="match status" value="1"/>
</dbReference>
<dbReference type="Gene3D" id="3.40.50.10830">
    <property type="entry name" value="F420-dependent methylenetetrahydromethanopterin dehydrogenase (MTD)"/>
    <property type="match status" value="1"/>
</dbReference>
<dbReference type="HAMAP" id="MF_00058">
    <property type="entry name" value="MTD"/>
    <property type="match status" value="1"/>
</dbReference>
<dbReference type="InterPro" id="IPR002844">
    <property type="entry name" value="MTD"/>
</dbReference>
<dbReference type="InterPro" id="IPR036080">
    <property type="entry name" value="MTD_sf"/>
</dbReference>
<dbReference type="NCBIfam" id="NF002162">
    <property type="entry name" value="PRK00994.1"/>
    <property type="match status" value="1"/>
</dbReference>
<dbReference type="Pfam" id="PF01993">
    <property type="entry name" value="MTD"/>
    <property type="match status" value="1"/>
</dbReference>
<dbReference type="PIRSF" id="PIRSF005627">
    <property type="entry name" value="MTD"/>
    <property type="match status" value="1"/>
</dbReference>
<dbReference type="SUPFAM" id="SSF102324">
    <property type="entry name" value="F420-dependent methylenetetrahydromethanopterin dehydrogenase (MTD)"/>
    <property type="match status" value="1"/>
</dbReference>
<keyword id="KW-0484">Methanogenesis</keyword>
<keyword id="KW-0554">One-carbon metabolism</keyword>
<keyword id="KW-0560">Oxidoreductase</keyword>
<keyword id="KW-1185">Reference proteome</keyword>
<comment type="function">
    <text evidence="1">Catalyzes the reversible reduction of methenyl-H(4)MPT(+) to methylene-H(4)MPT.</text>
</comment>
<comment type="catalytic activity">
    <reaction>
        <text>5,10-methylenetetrahydromethanopterin + oxidized coenzyme F420-(gamma-L-Glu)(n) + 2 H(+) = 5,10-methenyl-5,6,7,8-tetrahydromethanopterin + reduced coenzyme F420-(gamma-L-Glu)(n)</text>
        <dbReference type="Rhea" id="RHEA:16721"/>
        <dbReference type="Rhea" id="RHEA-COMP:12939"/>
        <dbReference type="Rhea" id="RHEA-COMP:14378"/>
        <dbReference type="ChEBI" id="CHEBI:15378"/>
        <dbReference type="ChEBI" id="CHEBI:57818"/>
        <dbReference type="ChEBI" id="CHEBI:58337"/>
        <dbReference type="ChEBI" id="CHEBI:133980"/>
        <dbReference type="ChEBI" id="CHEBI:139511"/>
        <dbReference type="EC" id="1.5.98.1"/>
    </reaction>
</comment>
<comment type="pathway">
    <text>One-carbon metabolism; methanogenesis from CO(2); 5,10-methylene-5,6,7,8-tetrahydromethanopterin from 5,10-methenyl-5,6,7,8-tetrahydromethanopterin (coenzyme F420 route): step 1/1.</text>
</comment>
<comment type="similarity">
    <text evidence="3">Belongs to the MTD family.</text>
</comment>
<accession>Q50501</accession>
<proteinExistence type="inferred from homology"/>
<evidence type="ECO:0000250" key="1"/>
<evidence type="ECO:0000256" key="2">
    <source>
        <dbReference type="SAM" id="MobiDB-lite"/>
    </source>
</evidence>
<evidence type="ECO:0000305" key="3"/>
<protein>
    <recommendedName>
        <fullName>F420-dependent methylenetetrahydromethanopterin dehydrogenase</fullName>
        <shortName>MTD</shortName>
        <ecNumber>1.5.98.1</ecNumber>
    </recommendedName>
    <alternativeName>
        <fullName>Coenzyme F420-dependent N5,N10-methylenetetrahydromethanopterin dehydrogenase</fullName>
    </alternativeName>
</protein>
<sequence>MVVKIGIIRCGNIGTSPVLDLLLDERADRPNIDVCVVGSGAKMNPDEIERAVPTMLEMDRDFVIFISPNPGAPGPAKARELLSEADVPAMIIGDAPGLRVKDEIEEQGLGYIIVKADPMIGARREFLDPTEMASFNSDVIKVLAFTGAYRVVQNTIDAMIADVEAGKAPELPQVVIDTDVAVEAAGYENPYAKAKAMAAYEIATKVADIDVKGCFMVQDPDKYIPIVASAHEMLAAAAKLAVEAREIEKANDTVLRTPHGKEGETLSKTDLLAKPE</sequence>
<feature type="initiator methionine" description="Removed" evidence="1">
    <location>
        <position position="1"/>
    </location>
</feature>
<feature type="chain" id="PRO_0000075041" description="F420-dependent methylenetetrahydromethanopterin dehydrogenase">
    <location>
        <begin position="2"/>
        <end position="276"/>
    </location>
</feature>
<feature type="region of interest" description="Disordered" evidence="2">
    <location>
        <begin position="257"/>
        <end position="276"/>
    </location>
</feature>
<feature type="compositionally biased region" description="Basic and acidic residues" evidence="2">
    <location>
        <begin position="259"/>
        <end position="276"/>
    </location>
</feature>